<accession>Q8UIN5</accession>
<evidence type="ECO:0000255" key="1">
    <source>
        <dbReference type="HAMAP-Rule" id="MF_00281"/>
    </source>
</evidence>
<evidence type="ECO:0000305" key="2"/>
<feature type="chain" id="PRO_0000126655" description="Phenylalanine--tRNA ligase alpha subunit">
    <location>
        <begin position="1"/>
        <end position="360"/>
    </location>
</feature>
<feature type="binding site" evidence="1">
    <location>
        <position position="260"/>
    </location>
    <ligand>
        <name>Mg(2+)</name>
        <dbReference type="ChEBI" id="CHEBI:18420"/>
        <note>shared with beta subunit</note>
    </ligand>
</feature>
<gene>
    <name evidence="1" type="primary">pheS</name>
    <name type="ordered locus">Atu0258</name>
    <name type="ORF">AGR_C_443</name>
</gene>
<comment type="catalytic activity">
    <reaction evidence="1">
        <text>tRNA(Phe) + L-phenylalanine + ATP = L-phenylalanyl-tRNA(Phe) + AMP + diphosphate + H(+)</text>
        <dbReference type="Rhea" id="RHEA:19413"/>
        <dbReference type="Rhea" id="RHEA-COMP:9668"/>
        <dbReference type="Rhea" id="RHEA-COMP:9699"/>
        <dbReference type="ChEBI" id="CHEBI:15378"/>
        <dbReference type="ChEBI" id="CHEBI:30616"/>
        <dbReference type="ChEBI" id="CHEBI:33019"/>
        <dbReference type="ChEBI" id="CHEBI:58095"/>
        <dbReference type="ChEBI" id="CHEBI:78442"/>
        <dbReference type="ChEBI" id="CHEBI:78531"/>
        <dbReference type="ChEBI" id="CHEBI:456215"/>
        <dbReference type="EC" id="6.1.1.20"/>
    </reaction>
</comment>
<comment type="cofactor">
    <cofactor evidence="1">
        <name>Mg(2+)</name>
        <dbReference type="ChEBI" id="CHEBI:18420"/>
    </cofactor>
    <text evidence="1">Binds 2 magnesium ions per tetramer.</text>
</comment>
<comment type="subunit">
    <text evidence="1">Tetramer of two alpha and two beta subunits.</text>
</comment>
<comment type="subcellular location">
    <subcellularLocation>
        <location evidence="1">Cytoplasm</location>
    </subcellularLocation>
</comment>
<comment type="similarity">
    <text evidence="1">Belongs to the class-II aminoacyl-tRNA synthetase family. Phe-tRNA synthetase alpha subunit type 1 subfamily.</text>
</comment>
<comment type="sequence caution" evidence="2">
    <conflict type="erroneous initiation">
        <sequence resource="EMBL-CDS" id="AAK86074"/>
    </conflict>
</comment>
<reference key="1">
    <citation type="journal article" date="2001" name="Science">
        <title>The genome of the natural genetic engineer Agrobacterium tumefaciens C58.</title>
        <authorList>
            <person name="Wood D.W."/>
            <person name="Setubal J.C."/>
            <person name="Kaul R."/>
            <person name="Monks D.E."/>
            <person name="Kitajima J.P."/>
            <person name="Okura V.K."/>
            <person name="Zhou Y."/>
            <person name="Chen L."/>
            <person name="Wood G.E."/>
            <person name="Almeida N.F. Jr."/>
            <person name="Woo L."/>
            <person name="Chen Y."/>
            <person name="Paulsen I.T."/>
            <person name="Eisen J.A."/>
            <person name="Karp P.D."/>
            <person name="Bovee D. Sr."/>
            <person name="Chapman P."/>
            <person name="Clendenning J."/>
            <person name="Deatherage G."/>
            <person name="Gillet W."/>
            <person name="Grant C."/>
            <person name="Kutyavin T."/>
            <person name="Levy R."/>
            <person name="Li M.-J."/>
            <person name="McClelland E."/>
            <person name="Palmieri A."/>
            <person name="Raymond C."/>
            <person name="Rouse G."/>
            <person name="Saenphimmachak C."/>
            <person name="Wu Z."/>
            <person name="Romero P."/>
            <person name="Gordon D."/>
            <person name="Zhang S."/>
            <person name="Yoo H."/>
            <person name="Tao Y."/>
            <person name="Biddle P."/>
            <person name="Jung M."/>
            <person name="Krespan W."/>
            <person name="Perry M."/>
            <person name="Gordon-Kamm B."/>
            <person name="Liao L."/>
            <person name="Kim S."/>
            <person name="Hendrick C."/>
            <person name="Zhao Z.-Y."/>
            <person name="Dolan M."/>
            <person name="Chumley F."/>
            <person name="Tingey S.V."/>
            <person name="Tomb J.-F."/>
            <person name="Gordon M.P."/>
            <person name="Olson M.V."/>
            <person name="Nester E.W."/>
        </authorList>
    </citation>
    <scope>NUCLEOTIDE SEQUENCE [LARGE SCALE GENOMIC DNA]</scope>
    <source>
        <strain>C58 / ATCC 33970</strain>
    </source>
</reference>
<reference key="2">
    <citation type="journal article" date="2001" name="Science">
        <title>Genome sequence of the plant pathogen and biotechnology agent Agrobacterium tumefaciens C58.</title>
        <authorList>
            <person name="Goodner B."/>
            <person name="Hinkle G."/>
            <person name="Gattung S."/>
            <person name="Miller N."/>
            <person name="Blanchard M."/>
            <person name="Qurollo B."/>
            <person name="Goldman B.S."/>
            <person name="Cao Y."/>
            <person name="Askenazi M."/>
            <person name="Halling C."/>
            <person name="Mullin L."/>
            <person name="Houmiel K."/>
            <person name="Gordon J."/>
            <person name="Vaudin M."/>
            <person name="Iartchouk O."/>
            <person name="Epp A."/>
            <person name="Liu F."/>
            <person name="Wollam C."/>
            <person name="Allinger M."/>
            <person name="Doughty D."/>
            <person name="Scott C."/>
            <person name="Lappas C."/>
            <person name="Markelz B."/>
            <person name="Flanagan C."/>
            <person name="Crowell C."/>
            <person name="Gurson J."/>
            <person name="Lomo C."/>
            <person name="Sear C."/>
            <person name="Strub G."/>
            <person name="Cielo C."/>
            <person name="Slater S."/>
        </authorList>
    </citation>
    <scope>NUCLEOTIDE SEQUENCE [LARGE SCALE GENOMIC DNA]</scope>
    <source>
        <strain>C58 / ATCC 33970</strain>
    </source>
</reference>
<name>SYFA_AGRFC</name>
<organism>
    <name type="scientific">Agrobacterium fabrum (strain C58 / ATCC 33970)</name>
    <name type="common">Agrobacterium tumefaciens (strain C58)</name>
    <dbReference type="NCBI Taxonomy" id="176299"/>
    <lineage>
        <taxon>Bacteria</taxon>
        <taxon>Pseudomonadati</taxon>
        <taxon>Pseudomonadota</taxon>
        <taxon>Alphaproteobacteria</taxon>
        <taxon>Hyphomicrobiales</taxon>
        <taxon>Rhizobiaceae</taxon>
        <taxon>Rhizobium/Agrobacterium group</taxon>
        <taxon>Agrobacterium</taxon>
        <taxon>Agrobacterium tumefaciens complex</taxon>
    </lineage>
</organism>
<proteinExistence type="inferred from homology"/>
<protein>
    <recommendedName>
        <fullName evidence="1">Phenylalanine--tRNA ligase alpha subunit</fullName>
        <ecNumber evidence="1">6.1.1.20</ecNumber>
    </recommendedName>
    <alternativeName>
        <fullName evidence="1">Phenylalanyl-tRNA synthetase alpha subunit</fullName>
        <shortName evidence="1">PheRS</shortName>
    </alternativeName>
</protein>
<dbReference type="EC" id="6.1.1.20" evidence="1"/>
<dbReference type="EMBL" id="AE007869">
    <property type="protein sequence ID" value="AAK86074.2"/>
    <property type="status" value="ALT_INIT"/>
    <property type="molecule type" value="Genomic_DNA"/>
</dbReference>
<dbReference type="PIR" id="A97390">
    <property type="entry name" value="A97390"/>
</dbReference>
<dbReference type="PIR" id="AB2608">
    <property type="entry name" value="AB2608"/>
</dbReference>
<dbReference type="RefSeq" id="NP_353289.2">
    <property type="nucleotide sequence ID" value="NC_003062.2"/>
</dbReference>
<dbReference type="RefSeq" id="WP_006310105.1">
    <property type="nucleotide sequence ID" value="NC_003062.2"/>
</dbReference>
<dbReference type="SMR" id="Q8UIN5"/>
<dbReference type="STRING" id="176299.Atu0258"/>
<dbReference type="EnsemblBacteria" id="AAK86074">
    <property type="protein sequence ID" value="AAK86074"/>
    <property type="gene ID" value="Atu0258"/>
</dbReference>
<dbReference type="GeneID" id="1132296"/>
<dbReference type="KEGG" id="atu:Atu0258"/>
<dbReference type="PATRIC" id="fig|176299.10.peg.249"/>
<dbReference type="eggNOG" id="COG0016">
    <property type="taxonomic scope" value="Bacteria"/>
</dbReference>
<dbReference type="HOGENOM" id="CLU_025086_0_1_5"/>
<dbReference type="OrthoDB" id="9800719at2"/>
<dbReference type="Proteomes" id="UP000000813">
    <property type="component" value="Chromosome circular"/>
</dbReference>
<dbReference type="GO" id="GO:0005737">
    <property type="term" value="C:cytoplasm"/>
    <property type="evidence" value="ECO:0007669"/>
    <property type="project" value="UniProtKB-SubCell"/>
</dbReference>
<dbReference type="GO" id="GO:0005524">
    <property type="term" value="F:ATP binding"/>
    <property type="evidence" value="ECO:0007669"/>
    <property type="project" value="UniProtKB-UniRule"/>
</dbReference>
<dbReference type="GO" id="GO:0000287">
    <property type="term" value="F:magnesium ion binding"/>
    <property type="evidence" value="ECO:0007669"/>
    <property type="project" value="UniProtKB-UniRule"/>
</dbReference>
<dbReference type="GO" id="GO:0004826">
    <property type="term" value="F:phenylalanine-tRNA ligase activity"/>
    <property type="evidence" value="ECO:0007669"/>
    <property type="project" value="UniProtKB-UniRule"/>
</dbReference>
<dbReference type="GO" id="GO:0000049">
    <property type="term" value="F:tRNA binding"/>
    <property type="evidence" value="ECO:0007669"/>
    <property type="project" value="InterPro"/>
</dbReference>
<dbReference type="GO" id="GO:0006432">
    <property type="term" value="P:phenylalanyl-tRNA aminoacylation"/>
    <property type="evidence" value="ECO:0007669"/>
    <property type="project" value="UniProtKB-UniRule"/>
</dbReference>
<dbReference type="CDD" id="cd00496">
    <property type="entry name" value="PheRS_alpha_core"/>
    <property type="match status" value="1"/>
</dbReference>
<dbReference type="FunFam" id="3.30.930.10:FF:000003">
    <property type="entry name" value="Phenylalanine--tRNA ligase alpha subunit"/>
    <property type="match status" value="1"/>
</dbReference>
<dbReference type="Gene3D" id="3.30.930.10">
    <property type="entry name" value="Bira Bifunctional Protein, Domain 2"/>
    <property type="match status" value="1"/>
</dbReference>
<dbReference type="HAMAP" id="MF_00281">
    <property type="entry name" value="Phe_tRNA_synth_alpha1"/>
    <property type="match status" value="1"/>
</dbReference>
<dbReference type="InterPro" id="IPR006195">
    <property type="entry name" value="aa-tRNA-synth_II"/>
</dbReference>
<dbReference type="InterPro" id="IPR045864">
    <property type="entry name" value="aa-tRNA-synth_II/BPL/LPL"/>
</dbReference>
<dbReference type="InterPro" id="IPR004529">
    <property type="entry name" value="Phe-tRNA-synth_IIc_asu"/>
</dbReference>
<dbReference type="InterPro" id="IPR004188">
    <property type="entry name" value="Phe-tRNA_ligase_II_N"/>
</dbReference>
<dbReference type="InterPro" id="IPR022911">
    <property type="entry name" value="Phe_tRNA_ligase_alpha1_bac"/>
</dbReference>
<dbReference type="InterPro" id="IPR002319">
    <property type="entry name" value="Phenylalanyl-tRNA_Synthase"/>
</dbReference>
<dbReference type="InterPro" id="IPR010978">
    <property type="entry name" value="tRNA-bd_arm"/>
</dbReference>
<dbReference type="NCBIfam" id="TIGR00468">
    <property type="entry name" value="pheS"/>
    <property type="match status" value="1"/>
</dbReference>
<dbReference type="PANTHER" id="PTHR11538:SF41">
    <property type="entry name" value="PHENYLALANINE--TRNA LIGASE, MITOCHONDRIAL"/>
    <property type="match status" value="1"/>
</dbReference>
<dbReference type="PANTHER" id="PTHR11538">
    <property type="entry name" value="PHENYLALANYL-TRNA SYNTHETASE"/>
    <property type="match status" value="1"/>
</dbReference>
<dbReference type="Pfam" id="PF02912">
    <property type="entry name" value="Phe_tRNA-synt_N"/>
    <property type="match status" value="1"/>
</dbReference>
<dbReference type="Pfam" id="PF01409">
    <property type="entry name" value="tRNA-synt_2d"/>
    <property type="match status" value="1"/>
</dbReference>
<dbReference type="SUPFAM" id="SSF55681">
    <property type="entry name" value="Class II aaRS and biotin synthetases"/>
    <property type="match status" value="1"/>
</dbReference>
<dbReference type="SUPFAM" id="SSF46589">
    <property type="entry name" value="tRNA-binding arm"/>
    <property type="match status" value="1"/>
</dbReference>
<dbReference type="PROSITE" id="PS50862">
    <property type="entry name" value="AA_TRNA_LIGASE_II"/>
    <property type="match status" value="1"/>
</dbReference>
<sequence length="360" mass="40445">MTELDTLKSQLMSEIAAAADEPAIEAVRVSALGKKGSVSELLKTLGSMTPEERQTRGAAINQLKTEITDLIGERKNALKDAAIAARLKAETVDVSLPVRQSPTERGRIHPISQIVDEITAIFADMGFSIAEGPDIETDYYNFTALNFPEGHPAREMHDTFFFQPDEKGERKVLRTHTSPVQIRTMESQKPPIRIVIPGKTYRQDSDATHSPMFHQVEGLVIDKKAHVGNLRWVLEEFCKTFFEVDSVVMRFRPSFFPFTEPSFEVDIQCDRSGPIVKFGEGKDWMEILGCGMVHPNVLRAGGLDPDEYQGFAWGMGLDRIAMLKYGMPDLRDFFNADVRWMNHYGFRPLDMPTLFGGLSV</sequence>
<keyword id="KW-0030">Aminoacyl-tRNA synthetase</keyword>
<keyword id="KW-0067">ATP-binding</keyword>
<keyword id="KW-0963">Cytoplasm</keyword>
<keyword id="KW-0436">Ligase</keyword>
<keyword id="KW-0460">Magnesium</keyword>
<keyword id="KW-0479">Metal-binding</keyword>
<keyword id="KW-0547">Nucleotide-binding</keyword>
<keyword id="KW-0648">Protein biosynthesis</keyword>
<keyword id="KW-1185">Reference proteome</keyword>